<feature type="chain" id="PRO_1000012508" description="3-phosphoshikimate 1-carboxyvinyltransferase">
    <location>
        <begin position="1"/>
        <end position="438"/>
    </location>
</feature>
<feature type="active site" description="Proton acceptor" evidence="1">
    <location>
        <position position="320"/>
    </location>
</feature>
<feature type="binding site" evidence="1">
    <location>
        <position position="26"/>
    </location>
    <ligand>
        <name>3-phosphoshikimate</name>
        <dbReference type="ChEBI" id="CHEBI:145989"/>
    </ligand>
</feature>
<feature type="binding site" evidence="1">
    <location>
        <position position="26"/>
    </location>
    <ligand>
        <name>phosphoenolpyruvate</name>
        <dbReference type="ChEBI" id="CHEBI:58702"/>
    </ligand>
</feature>
<feature type="binding site" evidence="1">
    <location>
        <position position="27"/>
    </location>
    <ligand>
        <name>3-phosphoshikimate</name>
        <dbReference type="ChEBI" id="CHEBI:145989"/>
    </ligand>
</feature>
<feature type="binding site" evidence="1">
    <location>
        <position position="31"/>
    </location>
    <ligand>
        <name>3-phosphoshikimate</name>
        <dbReference type="ChEBI" id="CHEBI:145989"/>
    </ligand>
</feature>
<feature type="binding site" evidence="1">
    <location>
        <position position="99"/>
    </location>
    <ligand>
        <name>phosphoenolpyruvate</name>
        <dbReference type="ChEBI" id="CHEBI:58702"/>
    </ligand>
</feature>
<feature type="binding site" evidence="1">
    <location>
        <position position="127"/>
    </location>
    <ligand>
        <name>phosphoenolpyruvate</name>
        <dbReference type="ChEBI" id="CHEBI:58702"/>
    </ligand>
</feature>
<feature type="binding site" evidence="1">
    <location>
        <position position="172"/>
    </location>
    <ligand>
        <name>3-phosphoshikimate</name>
        <dbReference type="ChEBI" id="CHEBI:145989"/>
    </ligand>
</feature>
<feature type="binding site" evidence="1">
    <location>
        <position position="174"/>
    </location>
    <ligand>
        <name>3-phosphoshikimate</name>
        <dbReference type="ChEBI" id="CHEBI:145989"/>
    </ligand>
</feature>
<feature type="binding site" evidence="1">
    <location>
        <position position="174"/>
    </location>
    <ligand>
        <name>phosphoenolpyruvate</name>
        <dbReference type="ChEBI" id="CHEBI:58702"/>
    </ligand>
</feature>
<feature type="binding site" evidence="1">
    <location>
        <position position="320"/>
    </location>
    <ligand>
        <name>3-phosphoshikimate</name>
        <dbReference type="ChEBI" id="CHEBI:145989"/>
    </ligand>
</feature>
<feature type="binding site" evidence="1">
    <location>
        <position position="347"/>
    </location>
    <ligand>
        <name>3-phosphoshikimate</name>
        <dbReference type="ChEBI" id="CHEBI:145989"/>
    </ligand>
</feature>
<feature type="binding site" evidence="1">
    <location>
        <position position="351"/>
    </location>
    <ligand>
        <name>phosphoenolpyruvate</name>
        <dbReference type="ChEBI" id="CHEBI:58702"/>
    </ligand>
</feature>
<feature type="binding site" evidence="1">
    <location>
        <position position="392"/>
    </location>
    <ligand>
        <name>phosphoenolpyruvate</name>
        <dbReference type="ChEBI" id="CHEBI:58702"/>
    </ligand>
</feature>
<gene>
    <name evidence="1" type="primary">aroA</name>
    <name type="ordered locus">XC_2643</name>
</gene>
<organism>
    <name type="scientific">Xanthomonas campestris pv. campestris (strain 8004)</name>
    <dbReference type="NCBI Taxonomy" id="314565"/>
    <lineage>
        <taxon>Bacteria</taxon>
        <taxon>Pseudomonadati</taxon>
        <taxon>Pseudomonadota</taxon>
        <taxon>Gammaproteobacteria</taxon>
        <taxon>Lysobacterales</taxon>
        <taxon>Lysobacteraceae</taxon>
        <taxon>Xanthomonas</taxon>
    </lineage>
</organism>
<keyword id="KW-0028">Amino-acid biosynthesis</keyword>
<keyword id="KW-0057">Aromatic amino acid biosynthesis</keyword>
<keyword id="KW-0963">Cytoplasm</keyword>
<keyword id="KW-0808">Transferase</keyword>
<protein>
    <recommendedName>
        <fullName evidence="1">3-phosphoshikimate 1-carboxyvinyltransferase</fullName>
        <ecNumber evidence="1">2.5.1.19</ecNumber>
    </recommendedName>
    <alternativeName>
        <fullName evidence="1">5-enolpyruvylshikimate-3-phosphate synthase</fullName>
        <shortName evidence="1">EPSP synthase</shortName>
        <shortName evidence="1">EPSPS</shortName>
    </alternativeName>
</protein>
<evidence type="ECO:0000255" key="1">
    <source>
        <dbReference type="HAMAP-Rule" id="MF_00210"/>
    </source>
</evidence>
<sequence length="438" mass="45100">MSNSTQHWIAQRGTALQGSLTIPGDKSVSHRAVMFAALADGISKIDGFLEGEDTRSTAAIFAQLGVRIETPSASQRIVHGVGVDGLQPPQGPLDCGNAGTGMRLLAGVLAAQRFDSVLVGDASLSKRPMRRVTGPLAQMGARIETESDGTPPLRVHGGQALQGITFASPVASAQVKSAVLLAGLYATGETSVSEPHPTRDYTERMLSAFGVEIAFSPGQARLRGGQRLRATDIAVPADFSSAAFFIVAASIIPGSGVTLRAVGLNPRRTGLLAALRLMGADIVEDNHAEHGGEPVADLRVRYAPLRGAQIPEALVPDMIDEFPALFVAAAAARGDTVVSGAAELRVKESDRLAAMATGLRALGIVVDETPDGATIHGGTLGSGVIESHGDHRIAMAFAIAGQLSTGTVQVNDVANVATSFPGFDSLAQGAGFGLSARP</sequence>
<proteinExistence type="inferred from homology"/>
<accession>Q4UTD1</accession>
<dbReference type="EC" id="2.5.1.19" evidence="1"/>
<dbReference type="EMBL" id="CP000050">
    <property type="protein sequence ID" value="AAY49692.1"/>
    <property type="molecule type" value="Genomic_DNA"/>
</dbReference>
<dbReference type="RefSeq" id="WP_011036773.1">
    <property type="nucleotide sequence ID" value="NZ_CP155948.1"/>
</dbReference>
<dbReference type="SMR" id="Q4UTD1"/>
<dbReference type="KEGG" id="xcb:XC_2643"/>
<dbReference type="HOGENOM" id="CLU_024321_0_1_6"/>
<dbReference type="UniPathway" id="UPA00053">
    <property type="reaction ID" value="UER00089"/>
</dbReference>
<dbReference type="Proteomes" id="UP000000420">
    <property type="component" value="Chromosome"/>
</dbReference>
<dbReference type="GO" id="GO:0005737">
    <property type="term" value="C:cytoplasm"/>
    <property type="evidence" value="ECO:0007669"/>
    <property type="project" value="UniProtKB-SubCell"/>
</dbReference>
<dbReference type="GO" id="GO:0003866">
    <property type="term" value="F:3-phosphoshikimate 1-carboxyvinyltransferase activity"/>
    <property type="evidence" value="ECO:0007669"/>
    <property type="project" value="UniProtKB-UniRule"/>
</dbReference>
<dbReference type="GO" id="GO:0008652">
    <property type="term" value="P:amino acid biosynthetic process"/>
    <property type="evidence" value="ECO:0007669"/>
    <property type="project" value="UniProtKB-KW"/>
</dbReference>
<dbReference type="GO" id="GO:0009073">
    <property type="term" value="P:aromatic amino acid family biosynthetic process"/>
    <property type="evidence" value="ECO:0007669"/>
    <property type="project" value="UniProtKB-KW"/>
</dbReference>
<dbReference type="GO" id="GO:0009423">
    <property type="term" value="P:chorismate biosynthetic process"/>
    <property type="evidence" value="ECO:0007669"/>
    <property type="project" value="UniProtKB-UniRule"/>
</dbReference>
<dbReference type="CDD" id="cd01556">
    <property type="entry name" value="EPSP_synthase"/>
    <property type="match status" value="1"/>
</dbReference>
<dbReference type="FunFam" id="3.65.10.10:FF:000005">
    <property type="entry name" value="3-phosphoshikimate 1-carboxyvinyltransferase"/>
    <property type="match status" value="1"/>
</dbReference>
<dbReference type="FunFam" id="3.65.10.10:FF:000006">
    <property type="entry name" value="3-phosphoshikimate 1-carboxyvinyltransferase"/>
    <property type="match status" value="1"/>
</dbReference>
<dbReference type="Gene3D" id="3.65.10.10">
    <property type="entry name" value="Enolpyruvate transferase domain"/>
    <property type="match status" value="2"/>
</dbReference>
<dbReference type="HAMAP" id="MF_00210">
    <property type="entry name" value="EPSP_synth"/>
    <property type="match status" value="1"/>
</dbReference>
<dbReference type="InterPro" id="IPR001986">
    <property type="entry name" value="Enolpyruvate_Tfrase_dom"/>
</dbReference>
<dbReference type="InterPro" id="IPR036968">
    <property type="entry name" value="Enolpyruvate_Tfrase_sf"/>
</dbReference>
<dbReference type="InterPro" id="IPR006264">
    <property type="entry name" value="EPSP_synthase"/>
</dbReference>
<dbReference type="InterPro" id="IPR023193">
    <property type="entry name" value="EPSP_synthase_CS"/>
</dbReference>
<dbReference type="InterPro" id="IPR013792">
    <property type="entry name" value="RNA3'P_cycl/enolpyr_Trfase_a/b"/>
</dbReference>
<dbReference type="NCBIfam" id="TIGR01356">
    <property type="entry name" value="aroA"/>
    <property type="match status" value="1"/>
</dbReference>
<dbReference type="PANTHER" id="PTHR21090">
    <property type="entry name" value="AROM/DEHYDROQUINATE SYNTHASE"/>
    <property type="match status" value="1"/>
</dbReference>
<dbReference type="PANTHER" id="PTHR21090:SF5">
    <property type="entry name" value="PENTAFUNCTIONAL AROM POLYPEPTIDE"/>
    <property type="match status" value="1"/>
</dbReference>
<dbReference type="Pfam" id="PF00275">
    <property type="entry name" value="EPSP_synthase"/>
    <property type="match status" value="1"/>
</dbReference>
<dbReference type="PIRSF" id="PIRSF000505">
    <property type="entry name" value="EPSPS"/>
    <property type="match status" value="1"/>
</dbReference>
<dbReference type="SUPFAM" id="SSF55205">
    <property type="entry name" value="EPT/RTPC-like"/>
    <property type="match status" value="1"/>
</dbReference>
<dbReference type="PROSITE" id="PS00104">
    <property type="entry name" value="EPSP_SYNTHASE_1"/>
    <property type="match status" value="1"/>
</dbReference>
<dbReference type="PROSITE" id="PS00885">
    <property type="entry name" value="EPSP_SYNTHASE_2"/>
    <property type="match status" value="1"/>
</dbReference>
<reference key="1">
    <citation type="journal article" date="2005" name="Genome Res.">
        <title>Comparative and functional genomic analyses of the pathogenicity of phytopathogen Xanthomonas campestris pv. campestris.</title>
        <authorList>
            <person name="Qian W."/>
            <person name="Jia Y."/>
            <person name="Ren S.-X."/>
            <person name="He Y.-Q."/>
            <person name="Feng J.-X."/>
            <person name="Lu L.-F."/>
            <person name="Sun Q."/>
            <person name="Ying G."/>
            <person name="Tang D.-J."/>
            <person name="Tang H."/>
            <person name="Wu W."/>
            <person name="Hao P."/>
            <person name="Wang L."/>
            <person name="Jiang B.-L."/>
            <person name="Zeng S."/>
            <person name="Gu W.-Y."/>
            <person name="Lu G."/>
            <person name="Rong L."/>
            <person name="Tian Y."/>
            <person name="Yao Z."/>
            <person name="Fu G."/>
            <person name="Chen B."/>
            <person name="Fang R."/>
            <person name="Qiang B."/>
            <person name="Chen Z."/>
            <person name="Zhao G.-P."/>
            <person name="Tang J.-L."/>
            <person name="He C."/>
        </authorList>
    </citation>
    <scope>NUCLEOTIDE SEQUENCE [LARGE SCALE GENOMIC DNA]</scope>
    <source>
        <strain>8004</strain>
    </source>
</reference>
<name>AROA_XANC8</name>
<comment type="function">
    <text evidence="1">Catalyzes the transfer of the enolpyruvyl moiety of phosphoenolpyruvate (PEP) to the 5-hydroxyl of shikimate-3-phosphate (S3P) to produce enolpyruvyl shikimate-3-phosphate and inorganic phosphate.</text>
</comment>
<comment type="catalytic activity">
    <reaction evidence="1">
        <text>3-phosphoshikimate + phosphoenolpyruvate = 5-O-(1-carboxyvinyl)-3-phosphoshikimate + phosphate</text>
        <dbReference type="Rhea" id="RHEA:21256"/>
        <dbReference type="ChEBI" id="CHEBI:43474"/>
        <dbReference type="ChEBI" id="CHEBI:57701"/>
        <dbReference type="ChEBI" id="CHEBI:58702"/>
        <dbReference type="ChEBI" id="CHEBI:145989"/>
        <dbReference type="EC" id="2.5.1.19"/>
    </reaction>
    <physiologicalReaction direction="left-to-right" evidence="1">
        <dbReference type="Rhea" id="RHEA:21257"/>
    </physiologicalReaction>
</comment>
<comment type="pathway">
    <text evidence="1">Metabolic intermediate biosynthesis; chorismate biosynthesis; chorismate from D-erythrose 4-phosphate and phosphoenolpyruvate: step 6/7.</text>
</comment>
<comment type="subunit">
    <text evidence="1">Monomer.</text>
</comment>
<comment type="subcellular location">
    <subcellularLocation>
        <location evidence="1">Cytoplasm</location>
    </subcellularLocation>
</comment>
<comment type="similarity">
    <text evidence="1">Belongs to the EPSP synthase family.</text>
</comment>